<name>MURC_SACEN</name>
<protein>
    <recommendedName>
        <fullName evidence="1">UDP-N-acetylmuramate--L-alanine ligase</fullName>
        <ecNumber evidence="1">6.3.2.8</ecNumber>
    </recommendedName>
    <alternativeName>
        <fullName evidence="1">UDP-N-acetylmuramoyl-L-alanine synthetase</fullName>
    </alternativeName>
</protein>
<keyword id="KW-0067">ATP-binding</keyword>
<keyword id="KW-0131">Cell cycle</keyword>
<keyword id="KW-0132">Cell division</keyword>
<keyword id="KW-0133">Cell shape</keyword>
<keyword id="KW-0961">Cell wall biogenesis/degradation</keyword>
<keyword id="KW-0963">Cytoplasm</keyword>
<keyword id="KW-0436">Ligase</keyword>
<keyword id="KW-0547">Nucleotide-binding</keyword>
<keyword id="KW-0573">Peptidoglycan synthesis</keyword>
<keyword id="KW-1185">Reference proteome</keyword>
<accession>A4FLV9</accession>
<organism>
    <name type="scientific">Saccharopolyspora erythraea (strain ATCC 11635 / DSM 40517 / JCM 4748 / NBRC 13426 / NCIMB 8594 / NRRL 2338)</name>
    <dbReference type="NCBI Taxonomy" id="405948"/>
    <lineage>
        <taxon>Bacteria</taxon>
        <taxon>Bacillati</taxon>
        <taxon>Actinomycetota</taxon>
        <taxon>Actinomycetes</taxon>
        <taxon>Pseudonocardiales</taxon>
        <taxon>Pseudonocardiaceae</taxon>
        <taxon>Saccharopolyspora</taxon>
    </lineage>
</organism>
<gene>
    <name evidence="1" type="primary">murC</name>
    <name type="ordered locus">SACE_5850</name>
</gene>
<proteinExistence type="inferred from homology"/>
<sequence>MRTDAAGGTYLDPSAADVTALLERVHLVGIGGAGMSGIARILLARGRQVSGSDARDSRTVLALKAQGAHIALGHRAENIEQFDGDPTAVVVSTAIRRDNPELVAAQERGVPVLRRAEALAALMADHRVACVAGTHGKTSTTSMLTVALQHCRLDPSFAIGGDLNESGANAHHGDGGVFVAEADESDGSFLVFAPSVAVVTNVEPDHLDHHGTAEAYTEVFQRFVERIEPGGVLIACADDAGAALLADQAEAAGVRVRRYGHEVTADGDARMVGYRPEHGSGVVTVEVSGDRLDVQVAVPGEHMAANAVAALLAGLELGAPLEGLLEGLAAFGGVRRRFEFKGRADGVRVYDDYAHHPTEVDAQLRAARPVVGDGRLVVVFQPHLYSRTAAFSGEFATALGLADEVVVLDVYGAREDPQPGVTGELIAESVPLPAERVHYEASFTAAAPLVAGLVQPGDLVLTMGAGDVTMLGPEILAEVERESGATEEDA</sequence>
<evidence type="ECO:0000255" key="1">
    <source>
        <dbReference type="HAMAP-Rule" id="MF_00046"/>
    </source>
</evidence>
<comment type="function">
    <text evidence="1">Cell wall formation.</text>
</comment>
<comment type="catalytic activity">
    <reaction evidence="1">
        <text>UDP-N-acetyl-alpha-D-muramate + L-alanine + ATP = UDP-N-acetyl-alpha-D-muramoyl-L-alanine + ADP + phosphate + H(+)</text>
        <dbReference type="Rhea" id="RHEA:23372"/>
        <dbReference type="ChEBI" id="CHEBI:15378"/>
        <dbReference type="ChEBI" id="CHEBI:30616"/>
        <dbReference type="ChEBI" id="CHEBI:43474"/>
        <dbReference type="ChEBI" id="CHEBI:57972"/>
        <dbReference type="ChEBI" id="CHEBI:70757"/>
        <dbReference type="ChEBI" id="CHEBI:83898"/>
        <dbReference type="ChEBI" id="CHEBI:456216"/>
        <dbReference type="EC" id="6.3.2.8"/>
    </reaction>
</comment>
<comment type="pathway">
    <text evidence="1">Cell wall biogenesis; peptidoglycan biosynthesis.</text>
</comment>
<comment type="subcellular location">
    <subcellularLocation>
        <location evidence="1">Cytoplasm</location>
    </subcellularLocation>
</comment>
<comment type="similarity">
    <text evidence="1">Belongs to the MurCDEF family.</text>
</comment>
<feature type="chain" id="PRO_0000336866" description="UDP-N-acetylmuramate--L-alanine ligase">
    <location>
        <begin position="1"/>
        <end position="490"/>
    </location>
</feature>
<feature type="binding site" evidence="1">
    <location>
        <begin position="133"/>
        <end position="139"/>
    </location>
    <ligand>
        <name>ATP</name>
        <dbReference type="ChEBI" id="CHEBI:30616"/>
    </ligand>
</feature>
<dbReference type="EC" id="6.3.2.8" evidence="1"/>
<dbReference type="EMBL" id="AM420293">
    <property type="protein sequence ID" value="CAM05034.1"/>
    <property type="molecule type" value="Genomic_DNA"/>
</dbReference>
<dbReference type="RefSeq" id="WP_009943140.1">
    <property type="nucleotide sequence ID" value="NC_009142.1"/>
</dbReference>
<dbReference type="SMR" id="A4FLV9"/>
<dbReference type="STRING" id="405948.SACE_5850"/>
<dbReference type="KEGG" id="sen:SACE_5850"/>
<dbReference type="eggNOG" id="COG0773">
    <property type="taxonomic scope" value="Bacteria"/>
</dbReference>
<dbReference type="HOGENOM" id="CLU_028104_2_2_11"/>
<dbReference type="OrthoDB" id="9804126at2"/>
<dbReference type="UniPathway" id="UPA00219"/>
<dbReference type="Proteomes" id="UP000006728">
    <property type="component" value="Chromosome"/>
</dbReference>
<dbReference type="GO" id="GO:0005737">
    <property type="term" value="C:cytoplasm"/>
    <property type="evidence" value="ECO:0007669"/>
    <property type="project" value="UniProtKB-SubCell"/>
</dbReference>
<dbReference type="GO" id="GO:0005524">
    <property type="term" value="F:ATP binding"/>
    <property type="evidence" value="ECO:0007669"/>
    <property type="project" value="UniProtKB-UniRule"/>
</dbReference>
<dbReference type="GO" id="GO:0008763">
    <property type="term" value="F:UDP-N-acetylmuramate-L-alanine ligase activity"/>
    <property type="evidence" value="ECO:0007669"/>
    <property type="project" value="UniProtKB-UniRule"/>
</dbReference>
<dbReference type="GO" id="GO:0051301">
    <property type="term" value="P:cell division"/>
    <property type="evidence" value="ECO:0007669"/>
    <property type="project" value="UniProtKB-KW"/>
</dbReference>
<dbReference type="GO" id="GO:0071555">
    <property type="term" value="P:cell wall organization"/>
    <property type="evidence" value="ECO:0007669"/>
    <property type="project" value="UniProtKB-KW"/>
</dbReference>
<dbReference type="GO" id="GO:0009252">
    <property type="term" value="P:peptidoglycan biosynthetic process"/>
    <property type="evidence" value="ECO:0007669"/>
    <property type="project" value="UniProtKB-UniRule"/>
</dbReference>
<dbReference type="GO" id="GO:0008360">
    <property type="term" value="P:regulation of cell shape"/>
    <property type="evidence" value="ECO:0007669"/>
    <property type="project" value="UniProtKB-KW"/>
</dbReference>
<dbReference type="Gene3D" id="3.90.190.20">
    <property type="entry name" value="Mur ligase, C-terminal domain"/>
    <property type="match status" value="1"/>
</dbReference>
<dbReference type="Gene3D" id="3.40.1190.10">
    <property type="entry name" value="Mur-like, catalytic domain"/>
    <property type="match status" value="1"/>
</dbReference>
<dbReference type="Gene3D" id="3.40.50.720">
    <property type="entry name" value="NAD(P)-binding Rossmann-like Domain"/>
    <property type="match status" value="1"/>
</dbReference>
<dbReference type="HAMAP" id="MF_00046">
    <property type="entry name" value="MurC"/>
    <property type="match status" value="1"/>
</dbReference>
<dbReference type="InterPro" id="IPR036565">
    <property type="entry name" value="Mur-like_cat_sf"/>
</dbReference>
<dbReference type="InterPro" id="IPR004101">
    <property type="entry name" value="Mur_ligase_C"/>
</dbReference>
<dbReference type="InterPro" id="IPR036615">
    <property type="entry name" value="Mur_ligase_C_dom_sf"/>
</dbReference>
<dbReference type="InterPro" id="IPR013221">
    <property type="entry name" value="Mur_ligase_cen"/>
</dbReference>
<dbReference type="InterPro" id="IPR000713">
    <property type="entry name" value="Mur_ligase_N"/>
</dbReference>
<dbReference type="InterPro" id="IPR050061">
    <property type="entry name" value="MurCDEF_pg_biosynth"/>
</dbReference>
<dbReference type="InterPro" id="IPR005758">
    <property type="entry name" value="UDP-N-AcMur_Ala_ligase_MurC"/>
</dbReference>
<dbReference type="NCBIfam" id="TIGR01082">
    <property type="entry name" value="murC"/>
    <property type="match status" value="1"/>
</dbReference>
<dbReference type="PANTHER" id="PTHR43445:SF3">
    <property type="entry name" value="UDP-N-ACETYLMURAMATE--L-ALANINE LIGASE"/>
    <property type="match status" value="1"/>
</dbReference>
<dbReference type="PANTHER" id="PTHR43445">
    <property type="entry name" value="UDP-N-ACETYLMURAMATE--L-ALANINE LIGASE-RELATED"/>
    <property type="match status" value="1"/>
</dbReference>
<dbReference type="Pfam" id="PF01225">
    <property type="entry name" value="Mur_ligase"/>
    <property type="match status" value="1"/>
</dbReference>
<dbReference type="Pfam" id="PF02875">
    <property type="entry name" value="Mur_ligase_C"/>
    <property type="match status" value="1"/>
</dbReference>
<dbReference type="Pfam" id="PF08245">
    <property type="entry name" value="Mur_ligase_M"/>
    <property type="match status" value="1"/>
</dbReference>
<dbReference type="SUPFAM" id="SSF51984">
    <property type="entry name" value="MurCD N-terminal domain"/>
    <property type="match status" value="1"/>
</dbReference>
<dbReference type="SUPFAM" id="SSF53623">
    <property type="entry name" value="MurD-like peptide ligases, catalytic domain"/>
    <property type="match status" value="1"/>
</dbReference>
<dbReference type="SUPFAM" id="SSF53244">
    <property type="entry name" value="MurD-like peptide ligases, peptide-binding domain"/>
    <property type="match status" value="1"/>
</dbReference>
<reference key="1">
    <citation type="journal article" date="2007" name="Nat. Biotechnol.">
        <title>Complete genome sequence of the erythromycin-producing bacterium Saccharopolyspora erythraea NRRL23338.</title>
        <authorList>
            <person name="Oliynyk M."/>
            <person name="Samborskyy M."/>
            <person name="Lester J.B."/>
            <person name="Mironenko T."/>
            <person name="Scott N."/>
            <person name="Dickens S."/>
            <person name="Haydock S.F."/>
            <person name="Leadlay P.F."/>
        </authorList>
    </citation>
    <scope>NUCLEOTIDE SEQUENCE [LARGE SCALE GENOMIC DNA]</scope>
    <source>
        <strain>ATCC 11635 / DSM 40517 / JCM 4748 / NBRC 13426 / NCIMB 8594 / NRRL 2338</strain>
    </source>
</reference>